<accession>Q9LPF6</accession>
<accession>Q2V4I7</accession>
<accession>Q3E7M0</accession>
<organism>
    <name type="scientific">Arabidopsis thaliana</name>
    <name type="common">Mouse-ear cress</name>
    <dbReference type="NCBI Taxonomy" id="3702"/>
    <lineage>
        <taxon>Eukaryota</taxon>
        <taxon>Viridiplantae</taxon>
        <taxon>Streptophyta</taxon>
        <taxon>Embryophyta</taxon>
        <taxon>Tracheophyta</taxon>
        <taxon>Spermatophyta</taxon>
        <taxon>Magnoliopsida</taxon>
        <taxon>eudicotyledons</taxon>
        <taxon>Gunneridae</taxon>
        <taxon>Pentapetalae</taxon>
        <taxon>rosids</taxon>
        <taxon>malvids</taxon>
        <taxon>Brassicales</taxon>
        <taxon>Brassicaceae</taxon>
        <taxon>Camelineae</taxon>
        <taxon>Arabidopsis</taxon>
    </lineage>
</organism>
<dbReference type="EMBL" id="AC020576">
    <property type="protein sequence ID" value="AAF78258.1"/>
    <property type="molecule type" value="Genomic_DNA"/>
</dbReference>
<dbReference type="EMBL" id="CP002684">
    <property type="protein sequence ID" value="AEE32044.1"/>
    <property type="molecule type" value="Genomic_DNA"/>
</dbReference>
<dbReference type="EMBL" id="CP002684">
    <property type="protein sequence ID" value="AEE32045.1"/>
    <property type="molecule type" value="Genomic_DNA"/>
</dbReference>
<dbReference type="EMBL" id="CP002684">
    <property type="protein sequence ID" value="AEE32046.1"/>
    <property type="molecule type" value="Genomic_DNA"/>
</dbReference>
<dbReference type="EMBL" id="CP002684">
    <property type="protein sequence ID" value="ANM60502.1"/>
    <property type="molecule type" value="Genomic_DNA"/>
</dbReference>
<dbReference type="EMBL" id="CP002684">
    <property type="protein sequence ID" value="ANM60503.1"/>
    <property type="molecule type" value="Genomic_DNA"/>
</dbReference>
<dbReference type="EMBL" id="CP002684">
    <property type="protein sequence ID" value="ANM60504.1"/>
    <property type="molecule type" value="Genomic_DNA"/>
</dbReference>
<dbReference type="EMBL" id="CP002684">
    <property type="protein sequence ID" value="ANM60505.1"/>
    <property type="molecule type" value="Genomic_DNA"/>
</dbReference>
<dbReference type="EMBL" id="CP002684">
    <property type="protein sequence ID" value="ANM60506.1"/>
    <property type="molecule type" value="Genomic_DNA"/>
</dbReference>
<dbReference type="EMBL" id="AY062782">
    <property type="protein sequence ID" value="AAL32860.1"/>
    <property type="molecule type" value="mRNA"/>
</dbReference>
<dbReference type="EMBL" id="BT003358">
    <property type="protein sequence ID" value="AAO29976.1"/>
    <property type="molecule type" value="mRNA"/>
</dbReference>
<dbReference type="PIR" id="D96506">
    <property type="entry name" value="D96506"/>
</dbReference>
<dbReference type="RefSeq" id="NP_001031147.1">
    <molecule id="Q9LPF6-3"/>
    <property type="nucleotide sequence ID" value="NM_001036070.1"/>
</dbReference>
<dbReference type="RefSeq" id="NP_001319164.1">
    <molecule id="Q9LPF6-3"/>
    <property type="nucleotide sequence ID" value="NM_001333232.1"/>
</dbReference>
<dbReference type="RefSeq" id="NP_001322784.1">
    <molecule id="Q9LPF6-3"/>
    <property type="nucleotide sequence ID" value="NM_001333233.1"/>
</dbReference>
<dbReference type="RefSeq" id="NP_001322785.1">
    <molecule id="Q9LPF6-3"/>
    <property type="nucleotide sequence ID" value="NM_001333234.1"/>
</dbReference>
<dbReference type="RefSeq" id="NP_001322786.1">
    <molecule id="Q9LPF6-2"/>
    <property type="nucleotide sequence ID" value="NM_001333235.1"/>
</dbReference>
<dbReference type="RefSeq" id="NP_001322787.1">
    <molecule id="Q9LPF6-3"/>
    <property type="nucleotide sequence ID" value="NM_001333236.1"/>
</dbReference>
<dbReference type="RefSeq" id="NP_175096.1">
    <molecule id="Q9LPF6-1"/>
    <property type="nucleotide sequence ID" value="NM_103556.4"/>
</dbReference>
<dbReference type="RefSeq" id="NP_973972.1">
    <molecule id="Q9LPF6-2"/>
    <property type="nucleotide sequence ID" value="NM_202243.3"/>
</dbReference>
<dbReference type="BioGRID" id="26264">
    <property type="interactions" value="1"/>
</dbReference>
<dbReference type="FunCoup" id="Q9LPF6">
    <property type="interactions" value="339"/>
</dbReference>
<dbReference type="IntAct" id="Q9LPF6">
    <property type="interactions" value="1"/>
</dbReference>
<dbReference type="STRING" id="3702.Q9LPF6"/>
<dbReference type="TCDB" id="2.A.7.14.3">
    <property type="family name" value="the drug/metabolite transporter (dmt) superfamily"/>
</dbReference>
<dbReference type="PaxDb" id="3702-AT1G44750.1"/>
<dbReference type="ProteomicsDB" id="224867">
    <molecule id="Q9LPF6-1"/>
</dbReference>
<dbReference type="EnsemblPlants" id="AT1G44750.1">
    <molecule id="Q9LPF6-1"/>
    <property type="protein sequence ID" value="AT1G44750.1"/>
    <property type="gene ID" value="AT1G44750"/>
</dbReference>
<dbReference type="EnsemblPlants" id="AT1G44750.2">
    <molecule id="Q9LPF6-2"/>
    <property type="protein sequence ID" value="AT1G44750.2"/>
    <property type="gene ID" value="AT1G44750"/>
</dbReference>
<dbReference type="EnsemblPlants" id="AT1G44750.3">
    <molecule id="Q9LPF6-3"/>
    <property type="protein sequence ID" value="AT1G44750.3"/>
    <property type="gene ID" value="AT1G44750"/>
</dbReference>
<dbReference type="EnsemblPlants" id="AT1G44750.4">
    <molecule id="Q9LPF6-3"/>
    <property type="protein sequence ID" value="AT1G44750.4"/>
    <property type="gene ID" value="AT1G44750"/>
</dbReference>
<dbReference type="EnsemblPlants" id="AT1G44750.5">
    <molecule id="Q9LPF6-3"/>
    <property type="protein sequence ID" value="AT1G44750.5"/>
    <property type="gene ID" value="AT1G44750"/>
</dbReference>
<dbReference type="EnsemblPlants" id="AT1G44750.6">
    <molecule id="Q9LPF6-2"/>
    <property type="protein sequence ID" value="AT1G44750.6"/>
    <property type="gene ID" value="AT1G44750"/>
</dbReference>
<dbReference type="EnsemblPlants" id="AT1G44750.7">
    <molecule id="Q9LPF6-3"/>
    <property type="protein sequence ID" value="AT1G44750.7"/>
    <property type="gene ID" value="AT1G44750"/>
</dbReference>
<dbReference type="EnsemblPlants" id="AT1G44750.8">
    <molecule id="Q9LPF6-3"/>
    <property type="protein sequence ID" value="AT1G44750.8"/>
    <property type="gene ID" value="AT1G44750"/>
</dbReference>
<dbReference type="GeneID" id="841039"/>
<dbReference type="Gramene" id="AT1G44750.1">
    <molecule id="Q9LPF6-1"/>
    <property type="protein sequence ID" value="AT1G44750.1"/>
    <property type="gene ID" value="AT1G44750"/>
</dbReference>
<dbReference type="Gramene" id="AT1G44750.2">
    <molecule id="Q9LPF6-2"/>
    <property type="protein sequence ID" value="AT1G44750.2"/>
    <property type="gene ID" value="AT1G44750"/>
</dbReference>
<dbReference type="Gramene" id="AT1G44750.3">
    <molecule id="Q9LPF6-3"/>
    <property type="protein sequence ID" value="AT1G44750.3"/>
    <property type="gene ID" value="AT1G44750"/>
</dbReference>
<dbReference type="Gramene" id="AT1G44750.4">
    <molecule id="Q9LPF6-3"/>
    <property type="protein sequence ID" value="AT1G44750.4"/>
    <property type="gene ID" value="AT1G44750"/>
</dbReference>
<dbReference type="Gramene" id="AT1G44750.5">
    <molecule id="Q9LPF6-3"/>
    <property type="protein sequence ID" value="AT1G44750.5"/>
    <property type="gene ID" value="AT1G44750"/>
</dbReference>
<dbReference type="Gramene" id="AT1G44750.6">
    <molecule id="Q9LPF6-2"/>
    <property type="protein sequence ID" value="AT1G44750.6"/>
    <property type="gene ID" value="AT1G44750"/>
</dbReference>
<dbReference type="Gramene" id="AT1G44750.7">
    <molecule id="Q9LPF6-3"/>
    <property type="protein sequence ID" value="AT1G44750.7"/>
    <property type="gene ID" value="AT1G44750"/>
</dbReference>
<dbReference type="Gramene" id="AT1G44750.8">
    <molecule id="Q9LPF6-3"/>
    <property type="protein sequence ID" value="AT1G44750.8"/>
    <property type="gene ID" value="AT1G44750"/>
</dbReference>
<dbReference type="KEGG" id="ath:AT1G44750"/>
<dbReference type="Araport" id="AT1G44750"/>
<dbReference type="TAIR" id="AT1G44750">
    <property type="gene designation" value="PUP11"/>
</dbReference>
<dbReference type="eggNOG" id="ENOG502QRUH">
    <property type="taxonomic scope" value="Eukaryota"/>
</dbReference>
<dbReference type="InParanoid" id="Q9LPF6"/>
<dbReference type="OMA" id="ASGEWMT"/>
<dbReference type="OrthoDB" id="1907510at2759"/>
<dbReference type="PhylomeDB" id="Q9LPF6"/>
<dbReference type="PRO" id="PR:Q9LPF6"/>
<dbReference type="Proteomes" id="UP000006548">
    <property type="component" value="Chromosome 1"/>
</dbReference>
<dbReference type="ExpressionAtlas" id="Q9LPF6">
    <property type="expression patterns" value="baseline and differential"/>
</dbReference>
<dbReference type="GO" id="GO:0016020">
    <property type="term" value="C:membrane"/>
    <property type="evidence" value="ECO:0000304"/>
    <property type="project" value="TAIR"/>
</dbReference>
<dbReference type="GO" id="GO:0005345">
    <property type="term" value="F:purine nucleobase transmembrane transporter activity"/>
    <property type="evidence" value="ECO:0000304"/>
    <property type="project" value="TAIR"/>
</dbReference>
<dbReference type="GO" id="GO:0015211">
    <property type="term" value="F:purine nucleoside transmembrane transporter activity"/>
    <property type="evidence" value="ECO:0007669"/>
    <property type="project" value="InterPro"/>
</dbReference>
<dbReference type="GO" id="GO:0006863">
    <property type="term" value="P:purine nucleobase transport"/>
    <property type="evidence" value="ECO:0000304"/>
    <property type="project" value="TAIR"/>
</dbReference>
<dbReference type="InterPro" id="IPR030182">
    <property type="entry name" value="PUP_plant"/>
</dbReference>
<dbReference type="PANTHER" id="PTHR31376">
    <property type="entry name" value="OS09G0467300 PROTEIN-RELATED"/>
    <property type="match status" value="1"/>
</dbReference>
<dbReference type="PANTHER" id="PTHR31376:SF2">
    <property type="entry name" value="PURINE PERMEASE 11-RELATED"/>
    <property type="match status" value="1"/>
</dbReference>
<dbReference type="Pfam" id="PF16913">
    <property type="entry name" value="PUNUT"/>
    <property type="match status" value="1"/>
</dbReference>
<dbReference type="SUPFAM" id="SSF103481">
    <property type="entry name" value="Multidrug resistance efflux transporter EmrE"/>
    <property type="match status" value="1"/>
</dbReference>
<protein>
    <recommendedName>
        <fullName>Probable purine permease 11</fullName>
        <shortName>AtPUP11</shortName>
    </recommendedName>
</protein>
<gene>
    <name type="primary">PUP11</name>
    <name type="ordered locus">At1g44750</name>
    <name type="ORF">T12C22.2</name>
</gene>
<reference key="1">
    <citation type="journal article" date="2000" name="Nature">
        <title>Sequence and analysis of chromosome 1 of the plant Arabidopsis thaliana.</title>
        <authorList>
            <person name="Theologis A."/>
            <person name="Ecker J.R."/>
            <person name="Palm C.J."/>
            <person name="Federspiel N.A."/>
            <person name="Kaul S."/>
            <person name="White O."/>
            <person name="Alonso J."/>
            <person name="Altafi H."/>
            <person name="Araujo R."/>
            <person name="Bowman C.L."/>
            <person name="Brooks S.Y."/>
            <person name="Buehler E."/>
            <person name="Chan A."/>
            <person name="Chao Q."/>
            <person name="Chen H."/>
            <person name="Cheuk R.F."/>
            <person name="Chin C.W."/>
            <person name="Chung M.K."/>
            <person name="Conn L."/>
            <person name="Conway A.B."/>
            <person name="Conway A.R."/>
            <person name="Creasy T.H."/>
            <person name="Dewar K."/>
            <person name="Dunn P."/>
            <person name="Etgu P."/>
            <person name="Feldblyum T.V."/>
            <person name="Feng J.-D."/>
            <person name="Fong B."/>
            <person name="Fujii C.Y."/>
            <person name="Gill J.E."/>
            <person name="Goldsmith A.D."/>
            <person name="Haas B."/>
            <person name="Hansen N.F."/>
            <person name="Hughes B."/>
            <person name="Huizar L."/>
            <person name="Hunter J.L."/>
            <person name="Jenkins J."/>
            <person name="Johnson-Hopson C."/>
            <person name="Khan S."/>
            <person name="Khaykin E."/>
            <person name="Kim C.J."/>
            <person name="Koo H.L."/>
            <person name="Kremenetskaia I."/>
            <person name="Kurtz D.B."/>
            <person name="Kwan A."/>
            <person name="Lam B."/>
            <person name="Langin-Hooper S."/>
            <person name="Lee A."/>
            <person name="Lee J.M."/>
            <person name="Lenz C.A."/>
            <person name="Li J.H."/>
            <person name="Li Y.-P."/>
            <person name="Lin X."/>
            <person name="Liu S.X."/>
            <person name="Liu Z.A."/>
            <person name="Luros J.S."/>
            <person name="Maiti R."/>
            <person name="Marziali A."/>
            <person name="Militscher J."/>
            <person name="Miranda M."/>
            <person name="Nguyen M."/>
            <person name="Nierman W.C."/>
            <person name="Osborne B.I."/>
            <person name="Pai G."/>
            <person name="Peterson J."/>
            <person name="Pham P.K."/>
            <person name="Rizzo M."/>
            <person name="Rooney T."/>
            <person name="Rowley D."/>
            <person name="Sakano H."/>
            <person name="Salzberg S.L."/>
            <person name="Schwartz J.R."/>
            <person name="Shinn P."/>
            <person name="Southwick A.M."/>
            <person name="Sun H."/>
            <person name="Tallon L.J."/>
            <person name="Tambunga G."/>
            <person name="Toriumi M.J."/>
            <person name="Town C.D."/>
            <person name="Utterback T."/>
            <person name="Van Aken S."/>
            <person name="Vaysberg M."/>
            <person name="Vysotskaia V.S."/>
            <person name="Walker M."/>
            <person name="Wu D."/>
            <person name="Yu G."/>
            <person name="Fraser C.M."/>
            <person name="Venter J.C."/>
            <person name="Davis R.W."/>
        </authorList>
    </citation>
    <scope>NUCLEOTIDE SEQUENCE [LARGE SCALE GENOMIC DNA]</scope>
    <source>
        <strain>cv. Columbia</strain>
    </source>
</reference>
<reference key="2">
    <citation type="journal article" date="2017" name="Plant J.">
        <title>Araport11: a complete reannotation of the Arabidopsis thaliana reference genome.</title>
        <authorList>
            <person name="Cheng C.Y."/>
            <person name="Krishnakumar V."/>
            <person name="Chan A.P."/>
            <person name="Thibaud-Nissen F."/>
            <person name="Schobel S."/>
            <person name="Town C.D."/>
        </authorList>
    </citation>
    <scope>GENOME REANNOTATION</scope>
    <source>
        <strain>cv. Columbia</strain>
    </source>
</reference>
<reference key="3">
    <citation type="journal article" date="2003" name="Science">
        <title>Empirical analysis of transcriptional activity in the Arabidopsis genome.</title>
        <authorList>
            <person name="Yamada K."/>
            <person name="Lim J."/>
            <person name="Dale J.M."/>
            <person name="Chen H."/>
            <person name="Shinn P."/>
            <person name="Palm C.J."/>
            <person name="Southwick A.M."/>
            <person name="Wu H.C."/>
            <person name="Kim C.J."/>
            <person name="Nguyen M."/>
            <person name="Pham P.K."/>
            <person name="Cheuk R.F."/>
            <person name="Karlin-Newmann G."/>
            <person name="Liu S.X."/>
            <person name="Lam B."/>
            <person name="Sakano H."/>
            <person name="Wu T."/>
            <person name="Yu G."/>
            <person name="Miranda M."/>
            <person name="Quach H.L."/>
            <person name="Tripp M."/>
            <person name="Chang C.H."/>
            <person name="Lee J.M."/>
            <person name="Toriumi M.J."/>
            <person name="Chan M.M."/>
            <person name="Tang C.C."/>
            <person name="Onodera C.S."/>
            <person name="Deng J.M."/>
            <person name="Akiyama K."/>
            <person name="Ansari Y."/>
            <person name="Arakawa T."/>
            <person name="Banh J."/>
            <person name="Banno F."/>
            <person name="Bowser L."/>
            <person name="Brooks S.Y."/>
            <person name="Carninci P."/>
            <person name="Chao Q."/>
            <person name="Choy N."/>
            <person name="Enju A."/>
            <person name="Goldsmith A.D."/>
            <person name="Gurjal M."/>
            <person name="Hansen N.F."/>
            <person name="Hayashizaki Y."/>
            <person name="Johnson-Hopson C."/>
            <person name="Hsuan V.W."/>
            <person name="Iida K."/>
            <person name="Karnes M."/>
            <person name="Khan S."/>
            <person name="Koesema E."/>
            <person name="Ishida J."/>
            <person name="Jiang P.X."/>
            <person name="Jones T."/>
            <person name="Kawai J."/>
            <person name="Kamiya A."/>
            <person name="Meyers C."/>
            <person name="Nakajima M."/>
            <person name="Narusaka M."/>
            <person name="Seki M."/>
            <person name="Sakurai T."/>
            <person name="Satou M."/>
            <person name="Tamse R."/>
            <person name="Vaysberg M."/>
            <person name="Wallender E.K."/>
            <person name="Wong C."/>
            <person name="Yamamura Y."/>
            <person name="Yuan S."/>
            <person name="Shinozaki K."/>
            <person name="Davis R.W."/>
            <person name="Theologis A."/>
            <person name="Ecker J.R."/>
        </authorList>
    </citation>
    <scope>NUCLEOTIDE SEQUENCE [LARGE SCALE MRNA] (ISOFORM 1)</scope>
    <source>
        <strain>cv. Columbia</strain>
    </source>
</reference>
<reference key="4">
    <citation type="journal article" date="2004" name="Proc. Natl. Acad. Sci. U.S.A.">
        <title>K+ channel interactions detected by a genetic system optimized for systematic studies of membrane protein interactions.</title>
        <authorList>
            <person name="Obrdlik P."/>
            <person name="El-Bakkoury M."/>
            <person name="Hamacher T."/>
            <person name="Cappellaro C."/>
            <person name="Vilarino C."/>
            <person name="Fleischer C."/>
            <person name="Ellerbrok H."/>
            <person name="Kamuzinzi R."/>
            <person name="Ledent V."/>
            <person name="Blaudez D."/>
            <person name="Sanders D."/>
            <person name="Revuelta J.L."/>
            <person name="Boles E."/>
            <person name="Andre B."/>
            <person name="Frommer W.B."/>
        </authorList>
    </citation>
    <scope>INTERACTION WITH KAT1</scope>
</reference>
<reference key="5">
    <citation type="journal article" date="2000" name="Plant Cell">
        <title>A new family of high-affinity transporters for adenine, cytosine, and purine derivatives in Arabidopsis.</title>
        <authorList>
            <person name="Gillissen B."/>
            <person name="Buerkle L."/>
            <person name="Andre B."/>
            <person name="Kuehn C."/>
            <person name="Rentsch D."/>
            <person name="Brandl B."/>
            <person name="Frommer W.B."/>
        </authorList>
    </citation>
    <scope>GENE FAMILY</scope>
    <scope>NOMENCLATURE</scope>
</reference>
<proteinExistence type="evidence at protein level"/>
<comment type="subunit">
    <text>May form a complex with the potassium channel subunit KAT1.</text>
</comment>
<comment type="subcellular location">
    <subcellularLocation>
        <location evidence="2">Membrane</location>
        <topology evidence="2">Multi-pass membrane protein</topology>
    </subcellularLocation>
</comment>
<comment type="alternative products">
    <event type="alternative splicing"/>
    <isoform>
        <id>Q9LPF6-1</id>
        <name>1</name>
        <sequence type="displayed"/>
    </isoform>
    <isoform>
        <id>Q9LPF6-2</id>
        <name>2</name>
        <sequence type="described" ref="VSP_030946"/>
    </isoform>
    <isoform>
        <id>Q9LPF6-3</id>
        <name>3</name>
        <sequence type="described" ref="VSP_030945"/>
    </isoform>
</comment>
<comment type="similarity">
    <text evidence="2">Belongs to the purine permeases (TC 2.A.7.14) family.</text>
</comment>
<sequence length="379" mass="41290">MAKEPVRVLVTGAAGNQEPILVKEESVVGIPTPLLKLKSWQWWVLVSVNIFFLIGGQAASVLLGRFYYDEGGNSKWMATLVQTAAFPILYIPLLLLPSSASVESSESSCSLKYIVLIYVLLGVIIAGDNMLYSVGLLYLSASTYSLICATQLAFNAVFSYFINAQKFTALILNSVVLLSFSAALIALNDDADTPSGVSRSKYIVGFVCTLAASALYSLLLSLMQFSFEKILKRETFSVVLEMQIYTSLVATCVSVIGLFASGEWRTLHGEMEGYHKGQASYVLTLVWTAVTWQVCSVGVVGLIFLVTSLFSNVISTLSLAVTPLAALVVFRDKMSGVKIMAMLIAIWGFASYVYQNHIDDLKVRQARQQAQAGRVEPPC</sequence>
<name>PUP11_ARATH</name>
<feature type="chain" id="PRO_0000317398" description="Probable purine permease 11">
    <location>
        <begin position="1"/>
        <end position="379"/>
    </location>
</feature>
<feature type="transmembrane region" description="Helical" evidence="1">
    <location>
        <begin position="43"/>
        <end position="63"/>
    </location>
</feature>
<feature type="transmembrane region" description="Helical" evidence="1">
    <location>
        <begin position="76"/>
        <end position="96"/>
    </location>
</feature>
<feature type="transmembrane region" description="Helical" evidence="1">
    <location>
        <begin position="114"/>
        <end position="134"/>
    </location>
</feature>
<feature type="transmembrane region" description="Helical" evidence="1">
    <location>
        <begin position="144"/>
        <end position="164"/>
    </location>
</feature>
<feature type="transmembrane region" description="Helical" evidence="1">
    <location>
        <begin position="167"/>
        <end position="187"/>
    </location>
</feature>
<feature type="transmembrane region" description="Helical" evidence="1">
    <location>
        <begin position="203"/>
        <end position="223"/>
    </location>
</feature>
<feature type="transmembrane region" description="Helical" evidence="1">
    <location>
        <begin position="239"/>
        <end position="259"/>
    </location>
</feature>
<feature type="transmembrane region" description="Helical" evidence="1">
    <location>
        <begin position="294"/>
        <end position="313"/>
    </location>
</feature>
<feature type="transmembrane region" description="Helical" evidence="1">
    <location>
        <begin position="314"/>
        <end position="330"/>
    </location>
</feature>
<feature type="transmembrane region" description="Helical" evidence="1">
    <location>
        <begin position="334"/>
        <end position="354"/>
    </location>
</feature>
<feature type="splice variant" id="VSP_030945" description="In isoform 3." evidence="2">
    <location>
        <begin position="1"/>
        <end position="76"/>
    </location>
</feature>
<feature type="splice variant" id="VSP_030946" description="In isoform 2." evidence="2">
    <original>MAKEPVRVLVTGAA</original>
    <variation>MS</variation>
    <location>
        <begin position="1"/>
        <end position="14"/>
    </location>
</feature>
<keyword id="KW-0025">Alternative splicing</keyword>
<keyword id="KW-0472">Membrane</keyword>
<keyword id="KW-1185">Reference proteome</keyword>
<keyword id="KW-0812">Transmembrane</keyword>
<keyword id="KW-1133">Transmembrane helix</keyword>
<keyword id="KW-0813">Transport</keyword>
<evidence type="ECO:0000255" key="1"/>
<evidence type="ECO:0000305" key="2"/>